<dbReference type="EMBL" id="BC110758">
    <property type="protein sequence ID" value="AAI10759.1"/>
    <property type="molecule type" value="mRNA"/>
</dbReference>
<dbReference type="RefSeq" id="NP_001089931.1">
    <property type="nucleotide sequence ID" value="NM_001096462.1"/>
</dbReference>
<dbReference type="SMR" id="Q2NLB0"/>
<dbReference type="DNASU" id="735000"/>
<dbReference type="GeneID" id="735000"/>
<dbReference type="KEGG" id="xla:735000"/>
<dbReference type="AGR" id="Xenbase:XB-GENE-5958036"/>
<dbReference type="CTD" id="735000"/>
<dbReference type="Xenbase" id="XB-GENE-5958036">
    <property type="gene designation" value="khdc4.L"/>
</dbReference>
<dbReference type="OrthoDB" id="397265at2759"/>
<dbReference type="Proteomes" id="UP000186698">
    <property type="component" value="Chromosome 8L"/>
</dbReference>
<dbReference type="Bgee" id="735000">
    <property type="expression patterns" value="Expressed in spleen and 19 other cell types or tissues"/>
</dbReference>
<dbReference type="GO" id="GO:0005737">
    <property type="term" value="C:cytoplasm"/>
    <property type="evidence" value="ECO:0000250"/>
    <property type="project" value="UniProtKB"/>
</dbReference>
<dbReference type="GO" id="GO:0005634">
    <property type="term" value="C:nucleus"/>
    <property type="evidence" value="ECO:0000250"/>
    <property type="project" value="UniProtKB"/>
</dbReference>
<dbReference type="GO" id="GO:0003723">
    <property type="term" value="F:RNA binding"/>
    <property type="evidence" value="ECO:0000250"/>
    <property type="project" value="UniProtKB"/>
</dbReference>
<dbReference type="GO" id="GO:0006376">
    <property type="term" value="P:mRNA splice site recognition"/>
    <property type="evidence" value="ECO:0000250"/>
    <property type="project" value="UniProtKB"/>
</dbReference>
<dbReference type="CDD" id="cd22385">
    <property type="entry name" value="KH-I_KHDC4_rpt1"/>
    <property type="match status" value="1"/>
</dbReference>
<dbReference type="CDD" id="cd22386">
    <property type="entry name" value="KH-I_KHDC4_rpt2"/>
    <property type="match status" value="1"/>
</dbReference>
<dbReference type="FunFam" id="3.30.1370.10:FF:000035">
    <property type="entry name" value="KH domain-containing 4, pre-mRNA-splicing factor"/>
    <property type="match status" value="1"/>
</dbReference>
<dbReference type="FunFam" id="3.30.1370.10:FF:000045">
    <property type="entry name" value="KH domain-containing 4, pre-mRNA-splicing factor"/>
    <property type="match status" value="1"/>
</dbReference>
<dbReference type="Gene3D" id="3.30.1370.10">
    <property type="entry name" value="K Homology domain, type 1"/>
    <property type="match status" value="2"/>
</dbReference>
<dbReference type="InterPro" id="IPR055256">
    <property type="entry name" value="KH_1_KHDC4/BBP-like"/>
</dbReference>
<dbReference type="InterPro" id="IPR036612">
    <property type="entry name" value="KH_dom_type_1_sf"/>
</dbReference>
<dbReference type="InterPro" id="IPR047890">
    <property type="entry name" value="KHDC4_KH-I_first"/>
</dbReference>
<dbReference type="InterPro" id="IPR047889">
    <property type="entry name" value="KHDC4_KH-I_second"/>
</dbReference>
<dbReference type="InterPro" id="IPR056149">
    <property type="entry name" value="PRP5/DDX46/KHDC4_KH"/>
</dbReference>
<dbReference type="InterPro" id="IPR031121">
    <property type="entry name" value="RIK/BLOM7"/>
</dbReference>
<dbReference type="PANTHER" id="PTHR15744">
    <property type="entry name" value="BLOM7"/>
    <property type="match status" value="1"/>
</dbReference>
<dbReference type="PANTHER" id="PTHR15744:SF0">
    <property type="entry name" value="KH HOMOLOGY DOMAIN-CONTAINING PROTEIN 4"/>
    <property type="match status" value="1"/>
</dbReference>
<dbReference type="Pfam" id="PF22675">
    <property type="entry name" value="KH-I_KHDC4-BBP"/>
    <property type="match status" value="1"/>
</dbReference>
<dbReference type="Pfam" id="PF23469">
    <property type="entry name" value="KH_12"/>
    <property type="match status" value="1"/>
</dbReference>
<dbReference type="SUPFAM" id="SSF54791">
    <property type="entry name" value="Eukaryotic type KH-domain (KH-domain type I)"/>
    <property type="match status" value="2"/>
</dbReference>
<accession>Q2NLB0</accession>
<gene>
    <name type="primary">khdc4</name>
    <name type="synonym">blom7</name>
</gene>
<comment type="function">
    <text evidence="1">RNA-binding protein involved in pre-mRNA splicing. Interacts with the PRP19C/Prp19 complex/NTC/Nineteen complex which is part of the spliceosome. Involved in regulating splice site selection. Binds preferentially RNA with A/C rich sequences and poly-C stretches.</text>
</comment>
<comment type="subunit">
    <text evidence="1">Interacts with PRPF19.</text>
</comment>
<comment type="subcellular location">
    <subcellularLocation>
        <location evidence="1">Nucleus</location>
    </subcellularLocation>
    <subcellularLocation>
        <location evidence="1">Cytoplasm</location>
    </subcellularLocation>
</comment>
<comment type="domain">
    <text evidence="1">The C-terminal part is necessary for the interaction with the PRP19C/Prp19 complex/NTC/Nineteen complex.</text>
</comment>
<comment type="domain">
    <text evidence="1">The KH domains mediate RNA-binding.</text>
</comment>
<comment type="similarity">
    <text evidence="3">Belongs to the KHDC4 family.</text>
</comment>
<reference key="1">
    <citation type="submission" date="2005-12" db="EMBL/GenBank/DDBJ databases">
        <authorList>
            <consortium name="NIH - Xenopus Gene Collection (XGC) project"/>
        </authorList>
    </citation>
    <scope>NUCLEOTIDE SEQUENCE [LARGE SCALE MRNA]</scope>
    <source>
        <tissue>Neurula</tissue>
    </source>
</reference>
<organism>
    <name type="scientific">Xenopus laevis</name>
    <name type="common">African clawed frog</name>
    <dbReference type="NCBI Taxonomy" id="8355"/>
    <lineage>
        <taxon>Eukaryota</taxon>
        <taxon>Metazoa</taxon>
        <taxon>Chordata</taxon>
        <taxon>Craniata</taxon>
        <taxon>Vertebrata</taxon>
        <taxon>Euteleostomi</taxon>
        <taxon>Amphibia</taxon>
        <taxon>Batrachia</taxon>
        <taxon>Anura</taxon>
        <taxon>Pipoidea</taxon>
        <taxon>Pipidae</taxon>
        <taxon>Xenopodinae</taxon>
        <taxon>Xenopus</taxon>
        <taxon>Xenopus</taxon>
    </lineage>
</organism>
<feature type="chain" id="PRO_0000296673" description="KH homology domain-containing protein 4">
    <location>
        <begin position="1"/>
        <end position="585"/>
    </location>
</feature>
<feature type="domain" description="KH 1" evidence="1">
    <location>
        <begin position="105"/>
        <end position="185"/>
    </location>
</feature>
<feature type="domain" description="KH 2" evidence="1">
    <location>
        <begin position="240"/>
        <end position="322"/>
    </location>
</feature>
<feature type="region of interest" description="Required for nuclear retention" evidence="1">
    <location>
        <begin position="455"/>
        <end position="523"/>
    </location>
</feature>
<feature type="region of interest" description="Disordered" evidence="2">
    <location>
        <begin position="482"/>
        <end position="516"/>
    </location>
</feature>
<feature type="region of interest" description="Disordered" evidence="2">
    <location>
        <begin position="543"/>
        <end position="585"/>
    </location>
</feature>
<feature type="compositionally biased region" description="Basic and acidic residues" evidence="2">
    <location>
        <begin position="485"/>
        <end position="494"/>
    </location>
</feature>
<name>KHDC4_XENLA</name>
<protein>
    <recommendedName>
        <fullName>KH homology domain-containing protein 4</fullName>
    </recommendedName>
    <alternativeName>
        <fullName evidence="1">Brings lots of money 7</fullName>
    </alternativeName>
    <alternativeName>
        <fullName>Pre-mRNA splicing factor protein khdc4</fullName>
    </alternativeName>
</protein>
<sequence length="585" mass="62400">MSAGSGRRSKWDQPGPPTTTLLLPGVIPAIIPFTAGAFLSPPEIAAADATSEAVSAPSGALDAAAAVAAKINAMLVAKGKIKPSQNATEKVHVPGKAPAAAKSKDDLVVAEVEINDVPLTCRNLLTRGQTQDEISRMSGAAVSTRGRYMTAEEKAKIGPGDRPLYLHVQGQTRELVDRAVNRIKEIITSGVVKAATGSSPTFNGATVTVYHQPAPVTPVVSAAPPKPQFQSGMHYVQDKLFVGLEHAVATFNVKEKVEGPGCSYLQHIQMETGAKVFLRGKGSGCIEPASGREAFEPMYIYISHPKPEGLAAAKKLCENLLQTVHAEYNRFVNQITSTAPMTGYAQPPQISSVSMQPQYYPPNGYQTGFPVVQPPAPQPAVQVPYVVSTPIASPVPPPPGVVPNMAAPVPAVPTCYPIPQVQPPGLSLPVPPQGQKRRFTEELPEERDSRLLGYQHGPIHMTNLGTGFLVQSKMDGASVRSDTVVVKERERDRQLMPPPGFPVSAQKEPEEKSAAGTLGVAEDNSIKKLKTSDKTFGLVAYAGDSSDEEEDHGVLKNSGWSAGYQYPASQQQQRPKPQMPFWMAP</sequence>
<proteinExistence type="evidence at transcript level"/>
<keyword id="KW-0963">Cytoplasm</keyword>
<keyword id="KW-0507">mRNA processing</keyword>
<keyword id="KW-0508">mRNA splicing</keyword>
<keyword id="KW-0539">Nucleus</keyword>
<keyword id="KW-0597">Phosphoprotein</keyword>
<keyword id="KW-1185">Reference proteome</keyword>
<keyword id="KW-0694">RNA-binding</keyword>
<evidence type="ECO:0000250" key="1">
    <source>
        <dbReference type="UniProtKB" id="Q7Z7F0"/>
    </source>
</evidence>
<evidence type="ECO:0000256" key="2">
    <source>
        <dbReference type="SAM" id="MobiDB-lite"/>
    </source>
</evidence>
<evidence type="ECO:0000305" key="3"/>